<evidence type="ECO:0000250" key="1"/>
<evidence type="ECO:0000255" key="2"/>
<evidence type="ECO:0000305" key="3"/>
<protein>
    <recommendedName>
        <fullName>Probable monogalactosyldiacylglycerol synthase, chloroplastic</fullName>
        <shortName>GmMGD1</shortName>
        <ecNumber>2.4.1.46</ecNumber>
    </recommendedName>
    <alternativeName>
        <fullName>MGDG synthase type A</fullName>
    </alternativeName>
</protein>
<organism>
    <name type="scientific">Glycine max</name>
    <name type="common">Soybean</name>
    <name type="synonym">Glycine hispida</name>
    <dbReference type="NCBI Taxonomy" id="3847"/>
    <lineage>
        <taxon>Eukaryota</taxon>
        <taxon>Viridiplantae</taxon>
        <taxon>Streptophyta</taxon>
        <taxon>Embryophyta</taxon>
        <taxon>Tracheophyta</taxon>
        <taxon>Spermatophyta</taxon>
        <taxon>Magnoliopsida</taxon>
        <taxon>eudicotyledons</taxon>
        <taxon>Gunneridae</taxon>
        <taxon>Pentapetalae</taxon>
        <taxon>rosids</taxon>
        <taxon>fabids</taxon>
        <taxon>Fabales</taxon>
        <taxon>Fabaceae</taxon>
        <taxon>Papilionoideae</taxon>
        <taxon>50 kb inversion clade</taxon>
        <taxon>NPAAA clade</taxon>
        <taxon>indigoferoid/millettioid clade</taxon>
        <taxon>Phaseoleae</taxon>
        <taxon>Glycine</taxon>
        <taxon>Glycine subgen. Soja</taxon>
    </lineage>
</organism>
<keyword id="KW-0150">Chloroplast</keyword>
<keyword id="KW-0328">Glycosyltransferase</keyword>
<keyword id="KW-0472">Membrane</keyword>
<keyword id="KW-0934">Plastid</keyword>
<keyword id="KW-1185">Reference proteome</keyword>
<keyword id="KW-0808">Transferase</keyword>
<keyword id="KW-0809">Transit peptide</keyword>
<comment type="function">
    <text evidence="1">Involved in the synthesis of the major structural component of photosynthetic membranes.</text>
</comment>
<comment type="catalytic activity">
    <reaction>
        <text>a 1,2-diacyl-sn-glycerol + UDP-alpha-D-galactose = a 1,2-diacyl-3-O-(beta-D-galactosyl)-sn-glycerol + UDP + H(+)</text>
        <dbReference type="Rhea" id="RHEA:14945"/>
        <dbReference type="ChEBI" id="CHEBI:15378"/>
        <dbReference type="ChEBI" id="CHEBI:17615"/>
        <dbReference type="ChEBI" id="CHEBI:17815"/>
        <dbReference type="ChEBI" id="CHEBI:58223"/>
        <dbReference type="ChEBI" id="CHEBI:66914"/>
        <dbReference type="EC" id="2.4.1.46"/>
    </reaction>
</comment>
<comment type="subcellular location">
    <subcellularLocation>
        <location evidence="3">Plastid</location>
        <location evidence="3">Chloroplast membrane</location>
    </subcellularLocation>
</comment>
<comment type="similarity">
    <text evidence="3">Belongs to the glycosyltransferase 28 family.</text>
</comment>
<proteinExistence type="evidence at transcript level"/>
<feature type="transit peptide" description="Chloroplast" evidence="2">
    <location>
        <begin position="1"/>
        <end position="105"/>
    </location>
</feature>
<feature type="chain" id="PRO_0000349426" description="Probable monogalactosyldiacylglycerol synthase, chloroplastic">
    <location>
        <begin position="106"/>
        <end position="530"/>
    </location>
</feature>
<reference key="1">
    <citation type="journal article" date="2001" name="Proc. Natl. Acad. Sci. U.S.A.">
        <title>Two types of MGDG synthase genes, found widely in both 16:3 and 18:3 plants, differentially mediate galactolipid syntheses in photosynthetic and nonphotosynthetic tissues in Arabidopsis thaliana.</title>
        <authorList>
            <person name="Awai K."/>
            <person name="Marechal E."/>
            <person name="Block M.A."/>
            <person name="Brun D."/>
            <person name="Masuda T."/>
            <person name="Shimada H."/>
            <person name="Takamiya K."/>
            <person name="Ohta H."/>
            <person name="Joyard J."/>
        </authorList>
    </citation>
    <scope>NUCLEOTIDE SEQUENCE [MRNA]</scope>
</reference>
<gene>
    <name type="primary">MGD A</name>
</gene>
<sequence length="530" mass="57839">MNNGVSQESSVLLDLASHVNRFAFDSFRSDNNKTLLSNFLHFNGNTRTGAAAAKRGVSLGGKVGGASVRFGNILNDFNRAVRFHCEKIPIGFASLRVGDGGDGADGNGNGEGNGVRVDECGGVENEGFRGNGVEGEKPKKVLILMSDTGGGHRASAEAIKAAFYQEFGDDYQVFVTDLWADHTPWPFNQLPRSYSFLVKHGPLWKMTYYGTAPRVVHQSNFAATGTFIAREVAKGLMKYQPDIIISVHPLMQHVPLRILRSKGLLKKIVFTTVITDLSTCHPTWFHKLVTRCYCPTTDVAQRALKAGLQQSQIKIFGLPVRPSFVKPVQPKDELRRELGMDEDLPAVLLMGGGEGMGPIEATARALGDSLYDENIGAPVGQILVICGRNKKLANKLSSINWKVPVQVKGFVTKMEECMGACDCIITKAGPGTIAEAQIRGLPIILNDYIAGQEAGNVPYVVENGCGKFSKSPKDIAKIVAEWFGPKAYELQQMSQNALRLARPDAVFKIVHDLHELVRQRSYLPEYSCTA</sequence>
<name>MGDG_SOYBN</name>
<dbReference type="EC" id="2.4.1.46"/>
<dbReference type="EMBL" id="AB047475">
    <property type="protein sequence ID" value="BAB11979.1"/>
    <property type="molecule type" value="mRNA"/>
</dbReference>
<dbReference type="SMR" id="Q9FZL4"/>
<dbReference type="FunCoup" id="Q9FZL4">
    <property type="interactions" value="826"/>
</dbReference>
<dbReference type="STRING" id="3847.Q9FZL4"/>
<dbReference type="CAZy" id="GT28">
    <property type="family name" value="Glycosyltransferase Family 28"/>
</dbReference>
<dbReference type="PaxDb" id="3847-GLYMA14G12120.1"/>
<dbReference type="EnsemblPlants" id="KRH15686">
    <property type="protein sequence ID" value="KRH15686"/>
    <property type="gene ID" value="GLYMA_14G104100"/>
</dbReference>
<dbReference type="Gramene" id="KRH15686">
    <property type="protein sequence ID" value="KRH15686"/>
    <property type="gene ID" value="GLYMA_14G104100"/>
</dbReference>
<dbReference type="KEGG" id="gmx:547469"/>
<dbReference type="eggNOG" id="ENOG502QPXV">
    <property type="taxonomic scope" value="Eukaryota"/>
</dbReference>
<dbReference type="HOGENOM" id="CLU_028367_3_1_1"/>
<dbReference type="InParanoid" id="Q9FZL4"/>
<dbReference type="OMA" id="WIERINQ"/>
<dbReference type="OrthoDB" id="200404at2759"/>
<dbReference type="Proteomes" id="UP000008827">
    <property type="component" value="Chromosome 14"/>
</dbReference>
<dbReference type="GO" id="GO:0031969">
    <property type="term" value="C:chloroplast membrane"/>
    <property type="evidence" value="ECO:0007669"/>
    <property type="project" value="UniProtKB-SubCell"/>
</dbReference>
<dbReference type="GO" id="GO:0046509">
    <property type="term" value="F:1,2-diacylglycerol 3-beta-galactosyltransferase activity"/>
    <property type="evidence" value="ECO:0007669"/>
    <property type="project" value="UniProtKB-EC"/>
</dbReference>
<dbReference type="GO" id="GO:0009247">
    <property type="term" value="P:glycolipid biosynthetic process"/>
    <property type="evidence" value="ECO:0007669"/>
    <property type="project" value="InterPro"/>
</dbReference>
<dbReference type="CDD" id="cd17507">
    <property type="entry name" value="GT28_Beta-DGS-like"/>
    <property type="match status" value="1"/>
</dbReference>
<dbReference type="FunFam" id="3.40.50.2000:FF:000111">
    <property type="entry name" value="Monogalactosyldiacylglycerol synthase 3, chloroplastic"/>
    <property type="match status" value="1"/>
</dbReference>
<dbReference type="Gene3D" id="3.40.50.2000">
    <property type="entry name" value="Glycogen Phosphorylase B"/>
    <property type="match status" value="1"/>
</dbReference>
<dbReference type="InterPro" id="IPR009695">
    <property type="entry name" value="Diacylglyc_glucosyltr_N"/>
</dbReference>
<dbReference type="InterPro" id="IPR007235">
    <property type="entry name" value="Glyco_trans_28_C"/>
</dbReference>
<dbReference type="InterPro" id="IPR050519">
    <property type="entry name" value="Glycosyltransf_28_UgtP"/>
</dbReference>
<dbReference type="PANTHER" id="PTHR43025">
    <property type="entry name" value="MONOGALACTOSYLDIACYLGLYCEROL SYNTHASE"/>
    <property type="match status" value="1"/>
</dbReference>
<dbReference type="PANTHER" id="PTHR43025:SF3">
    <property type="entry name" value="MONOGALACTOSYLDIACYLGLYCEROL SYNTHASE 1, CHLOROPLASTIC"/>
    <property type="match status" value="1"/>
</dbReference>
<dbReference type="Pfam" id="PF04101">
    <property type="entry name" value="Glyco_tran_28_C"/>
    <property type="match status" value="1"/>
</dbReference>
<dbReference type="Pfam" id="PF06925">
    <property type="entry name" value="MGDG_synth"/>
    <property type="match status" value="1"/>
</dbReference>
<dbReference type="SUPFAM" id="SSF53756">
    <property type="entry name" value="UDP-Glycosyltransferase/glycogen phosphorylase"/>
    <property type="match status" value="1"/>
</dbReference>
<accession>Q9FZL4</accession>